<feature type="chain" id="PRO_1000066641" description="Acyl carrier protein">
    <location>
        <begin position="1"/>
        <end position="78"/>
    </location>
</feature>
<feature type="domain" description="Carrier" evidence="2">
    <location>
        <begin position="2"/>
        <end position="77"/>
    </location>
</feature>
<feature type="modified residue" description="O-(pantetheine 4'-phosphoryl)serine" evidence="2">
    <location>
        <position position="37"/>
    </location>
</feature>
<keyword id="KW-0963">Cytoplasm</keyword>
<keyword id="KW-0275">Fatty acid biosynthesis</keyword>
<keyword id="KW-0276">Fatty acid metabolism</keyword>
<keyword id="KW-0444">Lipid biosynthesis</keyword>
<keyword id="KW-0443">Lipid metabolism</keyword>
<keyword id="KW-0596">Phosphopantetheine</keyword>
<keyword id="KW-0597">Phosphoprotein</keyword>
<keyword id="KW-1185">Reference proteome</keyword>
<protein>
    <recommendedName>
        <fullName evidence="1">Acyl carrier protein</fullName>
        <shortName evidence="1">ACP</shortName>
    </recommendedName>
</protein>
<dbReference type="EMBL" id="AE004969">
    <property type="protein sequence ID" value="AAW90383.1"/>
    <property type="molecule type" value="Genomic_DNA"/>
</dbReference>
<dbReference type="RefSeq" id="WP_003689968.1">
    <property type="nucleotide sequence ID" value="NC_002946.2"/>
</dbReference>
<dbReference type="RefSeq" id="YP_208795.1">
    <property type="nucleotide sequence ID" value="NC_002946.2"/>
</dbReference>
<dbReference type="SMR" id="Q5F604"/>
<dbReference type="STRING" id="242231.NGO_1762"/>
<dbReference type="GeneID" id="66754385"/>
<dbReference type="KEGG" id="ngo:NGO_1762"/>
<dbReference type="PATRIC" id="fig|242231.10.peg.2109"/>
<dbReference type="HOGENOM" id="CLU_108696_5_1_4"/>
<dbReference type="UniPathway" id="UPA00094"/>
<dbReference type="Proteomes" id="UP000000535">
    <property type="component" value="Chromosome"/>
</dbReference>
<dbReference type="GO" id="GO:0005829">
    <property type="term" value="C:cytosol"/>
    <property type="evidence" value="ECO:0007669"/>
    <property type="project" value="TreeGrafter"/>
</dbReference>
<dbReference type="GO" id="GO:0016020">
    <property type="term" value="C:membrane"/>
    <property type="evidence" value="ECO:0007669"/>
    <property type="project" value="GOC"/>
</dbReference>
<dbReference type="GO" id="GO:0000035">
    <property type="term" value="F:acyl binding"/>
    <property type="evidence" value="ECO:0007669"/>
    <property type="project" value="TreeGrafter"/>
</dbReference>
<dbReference type="GO" id="GO:0000036">
    <property type="term" value="F:acyl carrier activity"/>
    <property type="evidence" value="ECO:0007669"/>
    <property type="project" value="UniProtKB-UniRule"/>
</dbReference>
<dbReference type="GO" id="GO:0009245">
    <property type="term" value="P:lipid A biosynthetic process"/>
    <property type="evidence" value="ECO:0007669"/>
    <property type="project" value="TreeGrafter"/>
</dbReference>
<dbReference type="FunFam" id="1.10.1200.10:FF:000001">
    <property type="entry name" value="Acyl carrier protein"/>
    <property type="match status" value="1"/>
</dbReference>
<dbReference type="Gene3D" id="1.10.1200.10">
    <property type="entry name" value="ACP-like"/>
    <property type="match status" value="1"/>
</dbReference>
<dbReference type="HAMAP" id="MF_01217">
    <property type="entry name" value="Acyl_carrier"/>
    <property type="match status" value="1"/>
</dbReference>
<dbReference type="InterPro" id="IPR003231">
    <property type="entry name" value="ACP"/>
</dbReference>
<dbReference type="InterPro" id="IPR036736">
    <property type="entry name" value="ACP-like_sf"/>
</dbReference>
<dbReference type="InterPro" id="IPR009081">
    <property type="entry name" value="PP-bd_ACP"/>
</dbReference>
<dbReference type="InterPro" id="IPR006162">
    <property type="entry name" value="Ppantetheine_attach_site"/>
</dbReference>
<dbReference type="NCBIfam" id="TIGR00517">
    <property type="entry name" value="acyl_carrier"/>
    <property type="match status" value="1"/>
</dbReference>
<dbReference type="NCBIfam" id="NF002148">
    <property type="entry name" value="PRK00982.1-2"/>
    <property type="match status" value="1"/>
</dbReference>
<dbReference type="NCBIfam" id="NF002149">
    <property type="entry name" value="PRK00982.1-3"/>
    <property type="match status" value="1"/>
</dbReference>
<dbReference type="NCBIfam" id="NF002150">
    <property type="entry name" value="PRK00982.1-4"/>
    <property type="match status" value="1"/>
</dbReference>
<dbReference type="NCBIfam" id="NF002151">
    <property type="entry name" value="PRK00982.1-5"/>
    <property type="match status" value="1"/>
</dbReference>
<dbReference type="PANTHER" id="PTHR20863">
    <property type="entry name" value="ACYL CARRIER PROTEIN"/>
    <property type="match status" value="1"/>
</dbReference>
<dbReference type="PANTHER" id="PTHR20863:SF76">
    <property type="entry name" value="CARRIER DOMAIN-CONTAINING PROTEIN"/>
    <property type="match status" value="1"/>
</dbReference>
<dbReference type="Pfam" id="PF00550">
    <property type="entry name" value="PP-binding"/>
    <property type="match status" value="1"/>
</dbReference>
<dbReference type="SUPFAM" id="SSF47336">
    <property type="entry name" value="ACP-like"/>
    <property type="match status" value="1"/>
</dbReference>
<dbReference type="PROSITE" id="PS50075">
    <property type="entry name" value="CARRIER"/>
    <property type="match status" value="1"/>
</dbReference>
<dbReference type="PROSITE" id="PS00012">
    <property type="entry name" value="PHOSPHOPANTETHEINE"/>
    <property type="match status" value="1"/>
</dbReference>
<comment type="function">
    <text evidence="1">Carrier of the growing fatty acid chain in fatty acid biosynthesis.</text>
</comment>
<comment type="pathway">
    <text evidence="1">Lipid metabolism; fatty acid biosynthesis.</text>
</comment>
<comment type="subcellular location">
    <subcellularLocation>
        <location evidence="1">Cytoplasm</location>
    </subcellularLocation>
</comment>
<comment type="PTM">
    <text evidence="1">4'-phosphopantetheine is transferred from CoA to a specific serine of apo-ACP by AcpS. This modification is essential for activity because fatty acids are bound in thioester linkage to the sulfhydryl of the prosthetic group.</text>
</comment>
<comment type="similarity">
    <text evidence="1">Belongs to the acyl carrier protein (ACP) family.</text>
</comment>
<accession>Q5F604</accession>
<gene>
    <name evidence="1" type="primary">acpP</name>
    <name type="ordered locus">NGO_1762</name>
</gene>
<reference key="1">
    <citation type="submission" date="2003-03" db="EMBL/GenBank/DDBJ databases">
        <title>The complete genome sequence of Neisseria gonorrhoeae.</title>
        <authorList>
            <person name="Lewis L.A."/>
            <person name="Gillaspy A.F."/>
            <person name="McLaughlin R.E."/>
            <person name="Gipson M."/>
            <person name="Ducey T.F."/>
            <person name="Ownbey T."/>
            <person name="Hartman K."/>
            <person name="Nydick C."/>
            <person name="Carson M.B."/>
            <person name="Vaughn J."/>
            <person name="Thomson C."/>
            <person name="Song L."/>
            <person name="Lin S."/>
            <person name="Yuan X."/>
            <person name="Najar F."/>
            <person name="Zhan M."/>
            <person name="Ren Q."/>
            <person name="Zhu H."/>
            <person name="Qi S."/>
            <person name="Kenton S.M."/>
            <person name="Lai H."/>
            <person name="White J.D."/>
            <person name="Clifton S."/>
            <person name="Roe B.A."/>
            <person name="Dyer D.W."/>
        </authorList>
    </citation>
    <scope>NUCLEOTIDE SEQUENCE [LARGE SCALE GENOMIC DNA]</scope>
    <source>
        <strain>ATCC 700825 / FA 1090</strain>
    </source>
</reference>
<evidence type="ECO:0000255" key="1">
    <source>
        <dbReference type="HAMAP-Rule" id="MF_01217"/>
    </source>
</evidence>
<evidence type="ECO:0000255" key="2">
    <source>
        <dbReference type="PROSITE-ProRule" id="PRU00258"/>
    </source>
</evidence>
<name>ACP_NEIG1</name>
<organism>
    <name type="scientific">Neisseria gonorrhoeae (strain ATCC 700825 / FA 1090)</name>
    <dbReference type="NCBI Taxonomy" id="242231"/>
    <lineage>
        <taxon>Bacteria</taxon>
        <taxon>Pseudomonadati</taxon>
        <taxon>Pseudomonadota</taxon>
        <taxon>Betaproteobacteria</taxon>
        <taxon>Neisseriales</taxon>
        <taxon>Neisseriaceae</taxon>
        <taxon>Neisseria</taxon>
    </lineage>
</organism>
<sequence>MSNIEQQVKKIIAEQLGVNEADVKNESSFQDDLGADSLDTVELVMALEEAFGCEIPDEDAEKITTVQLAIDYINAHNG</sequence>
<proteinExistence type="inferred from homology"/>